<keyword id="KW-1003">Cell membrane</keyword>
<keyword id="KW-0444">Lipid biosynthesis</keyword>
<keyword id="KW-0443">Lipid metabolism</keyword>
<keyword id="KW-0472">Membrane</keyword>
<keyword id="KW-0594">Phospholipid biosynthesis</keyword>
<keyword id="KW-1208">Phospholipid metabolism</keyword>
<keyword id="KW-1185">Reference proteome</keyword>
<keyword id="KW-0677">Repeat</keyword>
<keyword id="KW-0808">Transferase</keyword>
<comment type="function">
    <text evidence="1">Catalyzes the phosphatidyl group transfer from one phosphatidylglycerol molecule to another to form cardiolipin (CL) (diphosphatidylglycerol) and glycerol.</text>
</comment>
<comment type="catalytic activity">
    <reaction evidence="1">
        <text>2 a 1,2-diacyl-sn-glycero-3-phospho-(1'-sn-glycerol) = a cardiolipin + glycerol</text>
        <dbReference type="Rhea" id="RHEA:31451"/>
        <dbReference type="ChEBI" id="CHEBI:17754"/>
        <dbReference type="ChEBI" id="CHEBI:62237"/>
        <dbReference type="ChEBI" id="CHEBI:64716"/>
    </reaction>
</comment>
<comment type="subcellular location">
    <subcellularLocation>
        <location evidence="1">Cell membrane</location>
        <topology evidence="1">Peripheral membrane protein</topology>
    </subcellularLocation>
</comment>
<comment type="similarity">
    <text evidence="1">Belongs to the phospholipase D family. Cardiolipin synthase subfamily. ClsB sub-subfamily.</text>
</comment>
<gene>
    <name evidence="1" type="primary">clsB</name>
    <name type="synonym">ybhO</name>
    <name type="ordered locus">Z1008</name>
    <name type="ordered locus">ECs0867</name>
</gene>
<reference key="1">
    <citation type="journal article" date="2001" name="Nature">
        <title>Genome sequence of enterohaemorrhagic Escherichia coli O157:H7.</title>
        <authorList>
            <person name="Perna N.T."/>
            <person name="Plunkett G. III"/>
            <person name="Burland V."/>
            <person name="Mau B."/>
            <person name="Glasner J.D."/>
            <person name="Rose D.J."/>
            <person name="Mayhew G.F."/>
            <person name="Evans P.S."/>
            <person name="Gregor J."/>
            <person name="Kirkpatrick H.A."/>
            <person name="Posfai G."/>
            <person name="Hackett J."/>
            <person name="Klink S."/>
            <person name="Boutin A."/>
            <person name="Shao Y."/>
            <person name="Miller L."/>
            <person name="Grotbeck E.J."/>
            <person name="Davis N.W."/>
            <person name="Lim A."/>
            <person name="Dimalanta E.T."/>
            <person name="Potamousis K."/>
            <person name="Apodaca J."/>
            <person name="Anantharaman T.S."/>
            <person name="Lin J."/>
            <person name="Yen G."/>
            <person name="Schwartz D.C."/>
            <person name="Welch R.A."/>
            <person name="Blattner F.R."/>
        </authorList>
    </citation>
    <scope>NUCLEOTIDE SEQUENCE [LARGE SCALE GENOMIC DNA]</scope>
    <source>
        <strain>O157:H7 / EDL933 / ATCC 700927 / EHEC</strain>
    </source>
</reference>
<reference key="2">
    <citation type="journal article" date="2001" name="DNA Res.">
        <title>Complete genome sequence of enterohemorrhagic Escherichia coli O157:H7 and genomic comparison with a laboratory strain K-12.</title>
        <authorList>
            <person name="Hayashi T."/>
            <person name="Makino K."/>
            <person name="Ohnishi M."/>
            <person name="Kurokawa K."/>
            <person name="Ishii K."/>
            <person name="Yokoyama K."/>
            <person name="Han C.-G."/>
            <person name="Ohtsubo E."/>
            <person name="Nakayama K."/>
            <person name="Murata T."/>
            <person name="Tanaka M."/>
            <person name="Tobe T."/>
            <person name="Iida T."/>
            <person name="Takami H."/>
            <person name="Honda T."/>
            <person name="Sasakawa C."/>
            <person name="Ogasawara N."/>
            <person name="Yasunaga T."/>
            <person name="Kuhara S."/>
            <person name="Shiba T."/>
            <person name="Hattori M."/>
            <person name="Shinagawa H."/>
        </authorList>
    </citation>
    <scope>NUCLEOTIDE SEQUENCE [LARGE SCALE GENOMIC DNA]</scope>
    <source>
        <strain>O157:H7 / Sakai / RIMD 0509952 / EHEC</strain>
    </source>
</reference>
<proteinExistence type="inferred from homology"/>
<evidence type="ECO:0000255" key="1">
    <source>
        <dbReference type="HAMAP-Rule" id="MF_01917"/>
    </source>
</evidence>
<evidence type="ECO:0000256" key="2">
    <source>
        <dbReference type="SAM" id="MobiDB-lite"/>
    </source>
</evidence>
<sequence>MKCSWREGNKIQLLENGEQYYPAVFKAIGEAQERIILETFIWFEDDVGKQLHAALLAAAQRGVKAEVLLDGYGSPDLSDEFVNELTAAGVVFRYYDPRPRLFGMRTNVFRRMHRKIVVIDARIAFIGGLNYSAEHMSSYGPEAKQDYAVRLEGPIVEDILQFELENLPGQSAARRWWRRHHKAEENRQPGEAQVLLVWRDNEEHRDDIERHYLKMLTQARREVIIANAYFFPGYRFLHALRKAARRGVRIKLIIQGEPDMPIVRVGARLLYNYLVKGGVQVFEYRRRPLHGKVALMDDHWATVGSSNLDPLSLSLNLEANVIIHDRHFNQTLRDNLNGIIAADCQQVDETMLPKRTWWNLTKSVLAFHFLRHFPALVGWLPAHTPRLAQVDPPAQPTMETQDRVETENTGVKP</sequence>
<name>CLSB_ECO57</name>
<feature type="chain" id="PRO_0000201284" description="Cardiolipin synthase B">
    <location>
        <begin position="1"/>
        <end position="413"/>
    </location>
</feature>
<feature type="domain" description="PLD phosphodiesterase 1" evidence="1">
    <location>
        <begin position="108"/>
        <end position="135"/>
    </location>
</feature>
<feature type="domain" description="PLD phosphodiesterase 2" evidence="1">
    <location>
        <begin position="285"/>
        <end position="312"/>
    </location>
</feature>
<feature type="region of interest" description="Disordered" evidence="2">
    <location>
        <begin position="390"/>
        <end position="413"/>
    </location>
</feature>
<feature type="active site" evidence="1">
    <location>
        <position position="113"/>
    </location>
</feature>
<feature type="active site" evidence="1">
    <location>
        <position position="115"/>
    </location>
</feature>
<feature type="active site" evidence="1">
    <location>
        <position position="120"/>
    </location>
</feature>
<feature type="active site" evidence="1">
    <location>
        <position position="290"/>
    </location>
</feature>
<feature type="active site" evidence="1">
    <location>
        <position position="292"/>
    </location>
</feature>
<feature type="active site" evidence="1">
    <location>
        <position position="297"/>
    </location>
</feature>
<organism>
    <name type="scientific">Escherichia coli O157:H7</name>
    <dbReference type="NCBI Taxonomy" id="83334"/>
    <lineage>
        <taxon>Bacteria</taxon>
        <taxon>Pseudomonadati</taxon>
        <taxon>Pseudomonadota</taxon>
        <taxon>Gammaproteobacteria</taxon>
        <taxon>Enterobacterales</taxon>
        <taxon>Enterobacteriaceae</taxon>
        <taxon>Escherichia</taxon>
    </lineage>
</organism>
<dbReference type="EC" id="2.7.8.-" evidence="1"/>
<dbReference type="EMBL" id="AE005174">
    <property type="protein sequence ID" value="AAG55160.1"/>
    <property type="molecule type" value="Genomic_DNA"/>
</dbReference>
<dbReference type="EMBL" id="BA000007">
    <property type="protein sequence ID" value="BAB34290.1"/>
    <property type="molecule type" value="Genomic_DNA"/>
</dbReference>
<dbReference type="PIR" id="C90737">
    <property type="entry name" value="C90737"/>
</dbReference>
<dbReference type="PIR" id="D85587">
    <property type="entry name" value="D85587"/>
</dbReference>
<dbReference type="RefSeq" id="NP_308894.1">
    <property type="nucleotide sequence ID" value="NC_002695.1"/>
</dbReference>
<dbReference type="RefSeq" id="WP_000650337.1">
    <property type="nucleotide sequence ID" value="NZ_VOAI01000006.1"/>
</dbReference>
<dbReference type="SMR" id="P0AA85"/>
<dbReference type="STRING" id="155864.Z1008"/>
<dbReference type="GeneID" id="75204904"/>
<dbReference type="GeneID" id="917609"/>
<dbReference type="KEGG" id="ece:Z1008"/>
<dbReference type="KEGG" id="ecs:ECs_0867"/>
<dbReference type="PATRIC" id="fig|386585.9.peg.981"/>
<dbReference type="eggNOG" id="COG1502">
    <property type="taxonomic scope" value="Bacteria"/>
</dbReference>
<dbReference type="HOGENOM" id="CLU_038053_0_0_6"/>
<dbReference type="OMA" id="INYSADH"/>
<dbReference type="Proteomes" id="UP000000558">
    <property type="component" value="Chromosome"/>
</dbReference>
<dbReference type="Proteomes" id="UP000002519">
    <property type="component" value="Chromosome"/>
</dbReference>
<dbReference type="GO" id="GO:0005886">
    <property type="term" value="C:plasma membrane"/>
    <property type="evidence" value="ECO:0007669"/>
    <property type="project" value="UniProtKB-SubCell"/>
</dbReference>
<dbReference type="GO" id="GO:0008808">
    <property type="term" value="F:cardiolipin synthase activity"/>
    <property type="evidence" value="ECO:0007669"/>
    <property type="project" value="InterPro"/>
</dbReference>
<dbReference type="GO" id="GO:0032049">
    <property type="term" value="P:cardiolipin biosynthetic process"/>
    <property type="evidence" value="ECO:0007669"/>
    <property type="project" value="InterPro"/>
</dbReference>
<dbReference type="CDD" id="cd09110">
    <property type="entry name" value="PLDc_CLS_1"/>
    <property type="match status" value="1"/>
</dbReference>
<dbReference type="CDD" id="cd09159">
    <property type="entry name" value="PLDc_ybhO_like_2"/>
    <property type="match status" value="1"/>
</dbReference>
<dbReference type="FunFam" id="3.30.870.10:FF:000015">
    <property type="entry name" value="Cardiolipin synthase B"/>
    <property type="match status" value="1"/>
</dbReference>
<dbReference type="FunFam" id="3.30.870.10:FF:000016">
    <property type="entry name" value="Cardiolipin synthase B"/>
    <property type="match status" value="1"/>
</dbReference>
<dbReference type="Gene3D" id="3.30.870.10">
    <property type="entry name" value="Endonuclease Chain A"/>
    <property type="match status" value="2"/>
</dbReference>
<dbReference type="HAMAP" id="MF_01917">
    <property type="entry name" value="Cardiolipin_synth_ClsB"/>
    <property type="match status" value="1"/>
</dbReference>
<dbReference type="InterPro" id="IPR030872">
    <property type="entry name" value="Cardiolipin_synth_ClsB"/>
</dbReference>
<dbReference type="InterPro" id="IPR025202">
    <property type="entry name" value="PLD-like_dom"/>
</dbReference>
<dbReference type="InterPro" id="IPR001736">
    <property type="entry name" value="PLipase_D/transphosphatidylase"/>
</dbReference>
<dbReference type="NCBIfam" id="NF008427">
    <property type="entry name" value="PRK11263.1"/>
    <property type="match status" value="1"/>
</dbReference>
<dbReference type="PANTHER" id="PTHR21248">
    <property type="entry name" value="CARDIOLIPIN SYNTHASE"/>
    <property type="match status" value="1"/>
</dbReference>
<dbReference type="PANTHER" id="PTHR21248:SF23">
    <property type="entry name" value="CARDIOLIPIN SYNTHASE B"/>
    <property type="match status" value="1"/>
</dbReference>
<dbReference type="Pfam" id="PF13091">
    <property type="entry name" value="PLDc_2"/>
    <property type="match status" value="2"/>
</dbReference>
<dbReference type="SMART" id="SM00155">
    <property type="entry name" value="PLDc"/>
    <property type="match status" value="2"/>
</dbReference>
<dbReference type="SUPFAM" id="SSF56024">
    <property type="entry name" value="Phospholipase D/nuclease"/>
    <property type="match status" value="2"/>
</dbReference>
<dbReference type="PROSITE" id="PS50035">
    <property type="entry name" value="PLD"/>
    <property type="match status" value="2"/>
</dbReference>
<protein>
    <recommendedName>
        <fullName evidence="1">Cardiolipin synthase B</fullName>
        <shortName evidence="1">CL synthase</shortName>
        <ecNumber evidence="1">2.7.8.-</ecNumber>
    </recommendedName>
</protein>
<accession>P0AA85</accession>
<accession>P75771</accession>